<organism>
    <name type="scientific">Cryptomeria japonica</name>
    <name type="common">Japanese cedar</name>
    <name type="synonym">Cupressus japonica</name>
    <dbReference type="NCBI Taxonomy" id="3369"/>
    <lineage>
        <taxon>Eukaryota</taxon>
        <taxon>Viridiplantae</taxon>
        <taxon>Streptophyta</taxon>
        <taxon>Embryophyta</taxon>
        <taxon>Tracheophyta</taxon>
        <taxon>Spermatophyta</taxon>
        <taxon>Pinopsida</taxon>
        <taxon>Pinidae</taxon>
        <taxon>Conifers II</taxon>
        <taxon>Cupressales</taxon>
        <taxon>Cupressaceae</taxon>
        <taxon>Cryptomeria</taxon>
    </lineage>
</organism>
<keyword id="KW-0020">Allergen</keyword>
<keyword id="KW-1015">Disulfide bond</keyword>
<keyword id="KW-0325">Glycoprotein</keyword>
<keyword id="KW-0568">Pathogenesis-related protein</keyword>
<keyword id="KW-0611">Plant defense</keyword>
<keyword id="KW-0732">Signal</keyword>
<keyword id="KW-0346">Stress response</keyword>
<accession>Q8H995</accession>
<proteinExistence type="evidence at protein level"/>
<name>CRJ32_CRYJA</name>
<reference key="1">
    <citation type="journal article" date="2002" name="Biosci. Biotechnol. Biochem.">
        <title>Isolation and characterization of cDNAs that encode homologs of a pathogenesis-related protein allergen from Cryptomeria japonica.</title>
        <authorList>
            <person name="Futamura N."/>
            <person name="Mukai Y."/>
            <person name="Sakaguchi M."/>
            <person name="Yasueda H."/>
            <person name="Inouye S."/>
            <person name="Midoro-Horiuti T."/>
            <person name="Goldblum R.M."/>
            <person name="Shinohara K."/>
        </authorList>
    </citation>
    <scope>NUCLEOTIDE SEQUENCE [MRNA]</scope>
    <scope>TISSUE SPECIFICITY</scope>
    <source>
        <strain>cv. Boka-sugi</strain>
        <tissue>Pollen</tissue>
    </source>
</reference>
<reference key="2">
    <citation type="journal article" date="2006" name="Tree Physiol.">
        <title>Characterization of genes for novel thaumatin-like proteins in Cryptomeria japonica.</title>
        <authorList>
            <person name="Futamura N."/>
            <person name="Tani N."/>
            <person name="Tsumura Y."/>
            <person name="Nakajima N."/>
            <person name="Sakaguchi M."/>
            <person name="Shinohara K."/>
        </authorList>
    </citation>
    <scope>GENE FAMILY</scope>
    <scope>NOMENCLATURE</scope>
    <source>
        <tissue>Pollen</tissue>
    </source>
</reference>
<reference key="3">
    <citation type="journal article" date="2007" name="Allergy">
        <title>Isolation and characterization of native Cry j 3 from Japanese cedar (Cryptomeria japonica) pollen.</title>
        <authorList>
            <person name="Fujimura T."/>
            <person name="Futamura N."/>
            <person name="Midoro-Horiuti T."/>
            <person name="Togawa A."/>
            <person name="Goldblum R.M."/>
            <person name="Yasueda H."/>
            <person name="Saito A."/>
            <person name="Shinohara K."/>
            <person name="Masuda K."/>
            <person name="Kurata K."/>
            <person name="Sakaguchi M."/>
        </authorList>
    </citation>
    <scope>ALLERGEN</scope>
    <source>
        <tissue>Flower</tissue>
    </source>
</reference>
<reference key="4">
    <citation type="journal article" date="2010" name="Plant Cell Rep.">
        <title>The superfamily of thaumatin-like proteins: its origin, evolution, and expression towards biological function.</title>
        <authorList>
            <person name="Liu J.-J."/>
            <person name="Sturrock R."/>
            <person name="Ekramoddoullah A.K.M."/>
        </authorList>
    </citation>
    <scope>REVIEW ON THAUMATIN-LIKE PROTEINS</scope>
</reference>
<reference key="5">
    <citation type="journal article" date="2012" name="Vet. Immunol. Immunopathol.">
        <title>IgE reactivity to a Cry j 3, an allergen of Japanese cedar (Cryptomeria japonica) pollen in dogs with canine atopic dermatitis.</title>
        <authorList>
            <person name="Kubota S."/>
            <person name="Miyaji K."/>
            <person name="Shimo Y."/>
            <person name="Shimakura H."/>
            <person name="Takase Y."/>
            <person name="Okamoto N."/>
            <person name="Kiuchi A."/>
            <person name="Fujimura M."/>
            <person name="Fujimura T."/>
            <person name="DeBoer D.J."/>
            <person name="Tsukui T."/>
            <person name="Sakaguchi M."/>
        </authorList>
    </citation>
    <scope>ALLERGEN</scope>
    <source>
        <tissue>Pollen</tissue>
    </source>
</reference>
<reference key="6">
    <citation type="journal article" date="2015" name="Allergol. Int.">
        <title>Spectrum of allergens for Japanese cedar pollinosis and impact of component-resolved diagnosis on allergen-specific immunotherapy.</title>
        <authorList>
            <person name="Fujimura T."/>
            <person name="Kawamoto S."/>
        </authorList>
    </citation>
    <scope>REVIEW ON ALLERGEN</scope>
</reference>
<evidence type="ECO:0000255" key="1"/>
<evidence type="ECO:0000255" key="2">
    <source>
        <dbReference type="PROSITE-ProRule" id="PRU00498"/>
    </source>
</evidence>
<evidence type="ECO:0000255" key="3">
    <source>
        <dbReference type="PROSITE-ProRule" id="PRU00699"/>
    </source>
</evidence>
<evidence type="ECO:0000269" key="4">
    <source>
    </source>
</evidence>
<evidence type="ECO:0000269" key="5">
    <source>
    </source>
</evidence>
<evidence type="ECO:0000269" key="6">
    <source>
    </source>
</evidence>
<evidence type="ECO:0000303" key="7">
    <source>
    </source>
</evidence>
<evidence type="ECO:0000303" key="8">
    <source>
    </source>
</evidence>
<evidence type="ECO:0000303" key="9">
    <source>
    </source>
</evidence>
<evidence type="ECO:0000303" key="10">
    <source>
    </source>
</evidence>
<evidence type="ECO:0000305" key="11"/>
<comment type="function">
    <text evidence="9">May be involved in disease resistance.</text>
</comment>
<comment type="tissue specificity">
    <text evidence="4">Strongly expressed in roots and in female and male strobili, and, to a lower extent, in cotyledons, leaves, stems and pollen grains.</text>
</comment>
<comment type="allergen">
    <text evidence="5 6 10">Causes an oral allergy syndrome (OAS) reaction in human and animals (PubMed:17441795, PubMed:22749702, PubMed:26433527). Binds to IgE and induces the release of histamine from leukocytes of allergic patients (PubMed:17441795). Binds to IgE from canine atopic dermatitis (CAD) sensitive dogs (PubMed:22749702).</text>
</comment>
<comment type="similarity">
    <text evidence="3">Belongs to the thaumatin family.</text>
</comment>
<protein>
    <recommendedName>
        <fullName evidence="11">Pathogenesis-related thaumatin-like protein 3.2</fullName>
    </recommendedName>
    <allergenName evidence="7 8">Cry j 3.2</allergenName>
</protein>
<sequence length="233" mass="24904">MARAMHTVWIALVPTLFVFLQGINVKAATFDITNQCPYTVWAAASPGGGRQLAKGQTWTIQVPAGTTGGRVWARTGCSFDRSGRGTCQTGDCNGMLSCQGYGQVPATLAEYALNQYMNLDFYDISLVDGFNVPISMTPTSTNPNCKGRITCLSDINSKCPSELKVNGGCKSACARYNTAQYCCTGASANNCGPTNYSKFFKGQCPQAYSYAKDDATSTFTCPSGTNYKVVFCG</sequence>
<feature type="signal peptide" evidence="1">
    <location>
        <begin position="1"/>
        <end position="22"/>
    </location>
</feature>
<feature type="chain" id="PRO_5004309517" description="Pathogenesis-related thaumatin-like protein 3.2">
    <location>
        <begin position="23"/>
        <end position="233"/>
    </location>
</feature>
<feature type="glycosylation site" description="N-linked (GlcNAc...) asparagine" evidence="2">
    <location>
        <position position="195"/>
    </location>
</feature>
<feature type="disulfide bond" evidence="3">
    <location>
        <begin position="36"/>
        <end position="232"/>
    </location>
</feature>
<feature type="disulfide bond" evidence="3">
    <location>
        <begin position="77"/>
        <end position="87"/>
    </location>
</feature>
<feature type="disulfide bond" evidence="3">
    <location>
        <begin position="92"/>
        <end position="98"/>
    </location>
</feature>
<feature type="disulfide bond" evidence="3">
    <location>
        <begin position="145"/>
        <end position="221"/>
    </location>
</feature>
<feature type="disulfide bond" evidence="3">
    <location>
        <begin position="151"/>
        <end position="204"/>
    </location>
</feature>
<feature type="disulfide bond" evidence="3">
    <location>
        <begin position="159"/>
        <end position="169"/>
    </location>
</feature>
<feature type="disulfide bond" evidence="3">
    <location>
        <begin position="173"/>
        <end position="182"/>
    </location>
</feature>
<feature type="disulfide bond" evidence="3">
    <location>
        <begin position="183"/>
        <end position="191"/>
    </location>
</feature>
<dbReference type="EMBL" id="AB081304">
    <property type="protein sequence ID" value="BAC15615.1"/>
    <property type="molecule type" value="mRNA"/>
</dbReference>
<dbReference type="SMR" id="Q8H995"/>
<dbReference type="Allergome" id="805">
    <property type="allergen name" value="Cry j 3"/>
</dbReference>
<dbReference type="GO" id="GO:0006952">
    <property type="term" value="P:defense response"/>
    <property type="evidence" value="ECO:0007669"/>
    <property type="project" value="UniProtKB-KW"/>
</dbReference>
<dbReference type="CDD" id="cd09218">
    <property type="entry name" value="TLP-PA"/>
    <property type="match status" value="1"/>
</dbReference>
<dbReference type="FunFam" id="2.60.110.10:FF:000003">
    <property type="entry name" value="Thaumatin I"/>
    <property type="match status" value="1"/>
</dbReference>
<dbReference type="Gene3D" id="2.60.110.10">
    <property type="entry name" value="Thaumatin"/>
    <property type="match status" value="1"/>
</dbReference>
<dbReference type="InterPro" id="IPR037176">
    <property type="entry name" value="Osmotin/thaumatin-like_sf"/>
</dbReference>
<dbReference type="InterPro" id="IPR001938">
    <property type="entry name" value="Thaumatin"/>
</dbReference>
<dbReference type="InterPro" id="IPR017949">
    <property type="entry name" value="Thaumatin_CS"/>
</dbReference>
<dbReference type="PANTHER" id="PTHR31048">
    <property type="entry name" value="OS03G0233200 PROTEIN"/>
    <property type="match status" value="1"/>
</dbReference>
<dbReference type="Pfam" id="PF00314">
    <property type="entry name" value="Thaumatin"/>
    <property type="match status" value="1"/>
</dbReference>
<dbReference type="PIRSF" id="PIRSF002703">
    <property type="entry name" value="Thaumatin"/>
    <property type="match status" value="1"/>
</dbReference>
<dbReference type="PRINTS" id="PR00347">
    <property type="entry name" value="THAUMATIN"/>
</dbReference>
<dbReference type="SMART" id="SM00205">
    <property type="entry name" value="THN"/>
    <property type="match status" value="1"/>
</dbReference>
<dbReference type="SUPFAM" id="SSF49870">
    <property type="entry name" value="Osmotin, thaumatin-like protein"/>
    <property type="match status" value="1"/>
</dbReference>
<dbReference type="PROSITE" id="PS00316">
    <property type="entry name" value="THAUMATIN_1"/>
    <property type="match status" value="1"/>
</dbReference>
<dbReference type="PROSITE" id="PS51367">
    <property type="entry name" value="THAUMATIN_2"/>
    <property type="match status" value="1"/>
</dbReference>